<comment type="function">
    <text evidence="5 6 7 8">V region of the variable domain of immunoglobulin light chains that participates in the antigen recognition (PubMed:24600447). Immunoglobulins, also known as antibodies, are membrane-bound or secreted glycoproteins produced by B lymphocytes. In the recognition phase of humoral immunity, the membrane-bound immunoglobulins serve as receptors which, upon binding of a specific antigen, trigger the clonal expansion and differentiation of B lymphocytes into immunoglobulins-secreting plasma cells. Secreted immunoglobulins mediate the effector phase of humoral immunity, which results in the elimination of bound antigens (PubMed:20176268, PubMed:22158414). The antigen binding site is formed by the variable domain of one heavy chain, together with that of its associated light chain. Thus, each immunoglobulin has two antigen binding sites with remarkable affinity for a particular antigen. The variable domains are assembled by a process called V-(D)-J rearrangement and can then be subjected to somatic hypermutations which, after exposure to antigen and selection, allow affinity maturation for a particular antigen (PubMed:17576170, PubMed:20176268).</text>
</comment>
<comment type="subunit">
    <text evidence="6">Immunoglobulins are composed of two identical heavy chains and two identical light chains; disulfide-linked.</text>
</comment>
<comment type="subcellular location">
    <subcellularLocation>
        <location evidence="6 7">Secreted</location>
    </subcellularLocation>
    <subcellularLocation>
        <location evidence="6 7">Cell membrane</location>
    </subcellularLocation>
</comment>
<comment type="polymorphism">
    <text>There are several alleles. The sequence shown is that of IMGT allele IGKV3D-15*03.</text>
</comment>
<comment type="caution">
    <text evidence="10">For an example of a full-length immunoglobulin kappa light chain see AC P0DOX7.</text>
</comment>
<reference key="1">
    <citation type="journal article" date="2005" name="Nature">
        <title>Generation and annotation of the DNA sequences of human chromosomes 2 and 4.</title>
        <authorList>
            <person name="Hillier L.W."/>
            <person name="Graves T.A."/>
            <person name="Fulton R.S."/>
            <person name="Fulton L.A."/>
            <person name="Pepin K.H."/>
            <person name="Minx P."/>
            <person name="Wagner-McPherson C."/>
            <person name="Layman D."/>
            <person name="Wylie K."/>
            <person name="Sekhon M."/>
            <person name="Becker M.C."/>
            <person name="Fewell G.A."/>
            <person name="Delehaunty K.D."/>
            <person name="Miner T.L."/>
            <person name="Nash W.E."/>
            <person name="Kremitzki C."/>
            <person name="Oddy L."/>
            <person name="Du H."/>
            <person name="Sun H."/>
            <person name="Bradshaw-Cordum H."/>
            <person name="Ali J."/>
            <person name="Carter J."/>
            <person name="Cordes M."/>
            <person name="Harris A."/>
            <person name="Isak A."/>
            <person name="van Brunt A."/>
            <person name="Nguyen C."/>
            <person name="Du F."/>
            <person name="Courtney L."/>
            <person name="Kalicki J."/>
            <person name="Ozersky P."/>
            <person name="Abbott S."/>
            <person name="Armstrong J."/>
            <person name="Belter E.A."/>
            <person name="Caruso L."/>
            <person name="Cedroni M."/>
            <person name="Cotton M."/>
            <person name="Davidson T."/>
            <person name="Desai A."/>
            <person name="Elliott G."/>
            <person name="Erb T."/>
            <person name="Fronick C."/>
            <person name="Gaige T."/>
            <person name="Haakenson W."/>
            <person name="Haglund K."/>
            <person name="Holmes A."/>
            <person name="Harkins R."/>
            <person name="Kim K."/>
            <person name="Kruchowski S.S."/>
            <person name="Strong C.M."/>
            <person name="Grewal N."/>
            <person name="Goyea E."/>
            <person name="Hou S."/>
            <person name="Levy A."/>
            <person name="Martinka S."/>
            <person name="Mead K."/>
            <person name="McLellan M.D."/>
            <person name="Meyer R."/>
            <person name="Randall-Maher J."/>
            <person name="Tomlinson C."/>
            <person name="Dauphin-Kohlberg S."/>
            <person name="Kozlowicz-Reilly A."/>
            <person name="Shah N."/>
            <person name="Swearengen-Shahid S."/>
            <person name="Snider J."/>
            <person name="Strong J.T."/>
            <person name="Thompson J."/>
            <person name="Yoakum M."/>
            <person name="Leonard S."/>
            <person name="Pearman C."/>
            <person name="Trani L."/>
            <person name="Radionenko M."/>
            <person name="Waligorski J.E."/>
            <person name="Wang C."/>
            <person name="Rock S.M."/>
            <person name="Tin-Wollam A.-M."/>
            <person name="Maupin R."/>
            <person name="Latreille P."/>
            <person name="Wendl M.C."/>
            <person name="Yang S.-P."/>
            <person name="Pohl C."/>
            <person name="Wallis J.W."/>
            <person name="Spieth J."/>
            <person name="Bieri T.A."/>
            <person name="Berkowicz N."/>
            <person name="Nelson J.O."/>
            <person name="Osborne J."/>
            <person name="Ding L."/>
            <person name="Meyer R."/>
            <person name="Sabo A."/>
            <person name="Shotland Y."/>
            <person name="Sinha P."/>
            <person name="Wohldmann P.E."/>
            <person name="Cook L.L."/>
            <person name="Hickenbotham M.T."/>
            <person name="Eldred J."/>
            <person name="Williams D."/>
            <person name="Jones T.A."/>
            <person name="She X."/>
            <person name="Ciccarelli F.D."/>
            <person name="Izaurralde E."/>
            <person name="Taylor J."/>
            <person name="Schmutz J."/>
            <person name="Myers R.M."/>
            <person name="Cox D.R."/>
            <person name="Huang X."/>
            <person name="McPherson J.D."/>
            <person name="Mardis E.R."/>
            <person name="Clifton S.W."/>
            <person name="Warren W.C."/>
            <person name="Chinwalla A.T."/>
            <person name="Eddy S.R."/>
            <person name="Marra M.A."/>
            <person name="Ovcharenko I."/>
            <person name="Furey T.S."/>
            <person name="Miller W."/>
            <person name="Eichler E.E."/>
            <person name="Bork P."/>
            <person name="Suyama M."/>
            <person name="Torrents D."/>
            <person name="Waterston R.H."/>
            <person name="Wilson R.K."/>
        </authorList>
    </citation>
    <scope>NUCLEOTIDE SEQUENCE [LARGE SCALE GENOMIC DNA] (IMGT ALLELE IGKV3D-15*03)</scope>
</reference>
<reference key="2">
    <citation type="journal article" date="2001" name="Exp. Clin. Immunogenet.">
        <title>Nomenclature of the human immunoglobulin kappa (IGK) genes.</title>
        <authorList>
            <person name="Lefranc M.P."/>
        </authorList>
    </citation>
    <scope>NOMEMCLATURE</scope>
</reference>
<reference key="3">
    <citation type="book" date="2001" name="The Immunoglobulin FactsBook.">
        <title>The Immunoglobulin FactsBook.</title>
        <editorList>
            <person name="Lefranc M.P."/>
            <person name="Lefranc G."/>
        </editorList>
        <authorList>
            <person name="Lefranc M.P."/>
            <person name="Lefranc G."/>
        </authorList>
    </citation>
    <scope>NOMENCLATURE</scope>
</reference>
<reference key="4">
    <citation type="journal article" date="2007" name="Annu. Rev. Genet.">
        <title>Immunoglobulin somatic hypermutation.</title>
        <authorList>
            <person name="Teng G."/>
            <person name="Papavasiliou F.N."/>
        </authorList>
    </citation>
    <scope>REVIEW ON SOMATIC HYPERMUTATION</scope>
</reference>
<reference key="5">
    <citation type="journal article" date="2010" name="J. Allergy Clin. Immunol.">
        <title>Structure and function of immunoglobulins.</title>
        <authorList>
            <person name="Schroeder H.W. Jr."/>
            <person name="Cavacini L."/>
        </authorList>
    </citation>
    <scope>REVIEW ON IMMUNOGLOBULINS</scope>
</reference>
<reference key="6">
    <citation type="journal article" date="2012" name="Nat. Rev. Immunol.">
        <title>Molecular programming of B cell memory.</title>
        <authorList>
            <person name="McHeyzer-Williams M."/>
            <person name="Okitsu S."/>
            <person name="Wang N."/>
            <person name="McHeyzer-Williams L."/>
        </authorList>
    </citation>
    <scope>REVIEW ON FUNCTION</scope>
</reference>
<reference key="7">
    <citation type="journal article" date="2014" name="Front. Immunol.">
        <title>Immunoglobulin and T Cell Receptor Genes: IMGT((R)) and the Birth and Rise of Immunoinformatics.</title>
        <authorList>
            <person name="Lefranc M.P."/>
        </authorList>
    </citation>
    <scope>NOMENCLATURE</scope>
</reference>
<name>KVD15_HUMAN</name>
<organism>
    <name type="scientific">Homo sapiens</name>
    <name type="common">Human</name>
    <dbReference type="NCBI Taxonomy" id="9606"/>
    <lineage>
        <taxon>Eukaryota</taxon>
        <taxon>Metazoa</taxon>
        <taxon>Chordata</taxon>
        <taxon>Craniata</taxon>
        <taxon>Vertebrata</taxon>
        <taxon>Euteleostomi</taxon>
        <taxon>Mammalia</taxon>
        <taxon>Eutheria</taxon>
        <taxon>Euarchontoglires</taxon>
        <taxon>Primates</taxon>
        <taxon>Haplorrhini</taxon>
        <taxon>Catarrhini</taxon>
        <taxon>Hominidae</taxon>
        <taxon>Homo</taxon>
    </lineage>
</organism>
<dbReference type="EMBL" id="AC243981">
    <property type="status" value="NOT_ANNOTATED_CDS"/>
    <property type="molecule type" value="Genomic_DNA"/>
</dbReference>
<dbReference type="SMR" id="A0A087WSY6"/>
<dbReference type="FunCoup" id="A0A087WSY6">
    <property type="interactions" value="276"/>
</dbReference>
<dbReference type="IntAct" id="A0A087WSY6">
    <property type="interactions" value="1"/>
</dbReference>
<dbReference type="MINT" id="A0A087WSY6"/>
<dbReference type="IMGT_GENE-DB" id="IGKV3D-15"/>
<dbReference type="BioMuta" id="IGKV3D-15"/>
<dbReference type="jPOST" id="A0A087WSY6"/>
<dbReference type="MassIVE" id="A0A087WSY6"/>
<dbReference type="Ensembl" id="ENST00000417279.3">
    <property type="protein sequence ID" value="ENSP00000403672.3"/>
    <property type="gene ID" value="ENSG00000224041.3"/>
</dbReference>
<dbReference type="UCSC" id="uc061lry.1">
    <property type="organism name" value="human"/>
</dbReference>
<dbReference type="AGR" id="HGNC:5824"/>
<dbReference type="GeneCards" id="IGKV3D-15"/>
<dbReference type="HGNC" id="HGNC:5824">
    <property type="gene designation" value="IGKV3D-15"/>
</dbReference>
<dbReference type="HPA" id="ENSG00000224041">
    <property type="expression patterns" value="Group enriched (intestine, lymphoid tissue, salivary gland, stomach, urinary bladder)"/>
</dbReference>
<dbReference type="neXtProt" id="NX_A0A087WSY6"/>
<dbReference type="VEuPathDB" id="HostDB:ENSG00000224041"/>
<dbReference type="GeneTree" id="ENSGT00940000154413"/>
<dbReference type="HOGENOM" id="CLU_077975_4_1_1"/>
<dbReference type="InParanoid" id="A0A087WSY6"/>
<dbReference type="OMA" id="MSCKASE"/>
<dbReference type="OrthoDB" id="9538307at2759"/>
<dbReference type="PAN-GO" id="A0A087WSY6">
    <property type="GO annotations" value="3 GO annotations based on evolutionary models"/>
</dbReference>
<dbReference type="SignaLink" id="A0A087WSY6"/>
<dbReference type="Pharos" id="A0A087WSY6">
    <property type="development level" value="Tdark"/>
</dbReference>
<dbReference type="PRO" id="PR:A0A087WSY6"/>
<dbReference type="Proteomes" id="UP000005640">
    <property type="component" value="Chromosome 2"/>
</dbReference>
<dbReference type="RNAct" id="A0A087WSY6">
    <property type="molecule type" value="protein"/>
</dbReference>
<dbReference type="Bgee" id="ENSG00000224041">
    <property type="expression patterns" value="Expressed in rectum and 90 other cell types or tissues"/>
</dbReference>
<dbReference type="GO" id="GO:0005576">
    <property type="term" value="C:extracellular region"/>
    <property type="evidence" value="ECO:0007669"/>
    <property type="project" value="UniProtKB-SubCell"/>
</dbReference>
<dbReference type="GO" id="GO:0019814">
    <property type="term" value="C:immunoglobulin complex"/>
    <property type="evidence" value="ECO:0000318"/>
    <property type="project" value="GO_Central"/>
</dbReference>
<dbReference type="GO" id="GO:0005886">
    <property type="term" value="C:plasma membrane"/>
    <property type="evidence" value="ECO:0007669"/>
    <property type="project" value="UniProtKB-SubCell"/>
</dbReference>
<dbReference type="GO" id="GO:0002250">
    <property type="term" value="P:adaptive immune response"/>
    <property type="evidence" value="ECO:0007669"/>
    <property type="project" value="UniProtKB-KW"/>
</dbReference>
<dbReference type="GO" id="GO:0006955">
    <property type="term" value="P:immune response"/>
    <property type="evidence" value="ECO:0000318"/>
    <property type="project" value="GO_Central"/>
</dbReference>
<dbReference type="CDD" id="cd04980">
    <property type="entry name" value="IgV_L_kappa"/>
    <property type="match status" value="1"/>
</dbReference>
<dbReference type="FunFam" id="2.60.40.10:FF:000350">
    <property type="entry name" value="Immunoglobulin kappa chain variable 18-36"/>
    <property type="match status" value="1"/>
</dbReference>
<dbReference type="Gene3D" id="2.60.40.10">
    <property type="entry name" value="Immunoglobulins"/>
    <property type="match status" value="1"/>
</dbReference>
<dbReference type="InterPro" id="IPR007110">
    <property type="entry name" value="Ig-like_dom"/>
</dbReference>
<dbReference type="InterPro" id="IPR036179">
    <property type="entry name" value="Ig-like_dom_sf"/>
</dbReference>
<dbReference type="InterPro" id="IPR013783">
    <property type="entry name" value="Ig-like_fold"/>
</dbReference>
<dbReference type="InterPro" id="IPR003599">
    <property type="entry name" value="Ig_sub"/>
</dbReference>
<dbReference type="InterPro" id="IPR013106">
    <property type="entry name" value="Ig_V-set"/>
</dbReference>
<dbReference type="InterPro" id="IPR050150">
    <property type="entry name" value="IgV_Light_Chain"/>
</dbReference>
<dbReference type="PANTHER" id="PTHR23267">
    <property type="entry name" value="IMMUNOGLOBULIN LIGHT CHAIN"/>
    <property type="match status" value="1"/>
</dbReference>
<dbReference type="Pfam" id="PF07686">
    <property type="entry name" value="V-set"/>
    <property type="match status" value="1"/>
</dbReference>
<dbReference type="SMART" id="SM00409">
    <property type="entry name" value="IG"/>
    <property type="match status" value="1"/>
</dbReference>
<dbReference type="SMART" id="SM00406">
    <property type="entry name" value="IGv"/>
    <property type="match status" value="1"/>
</dbReference>
<dbReference type="SUPFAM" id="SSF48726">
    <property type="entry name" value="Immunoglobulin"/>
    <property type="match status" value="1"/>
</dbReference>
<dbReference type="PROSITE" id="PS50835">
    <property type="entry name" value="IG_LIKE"/>
    <property type="match status" value="1"/>
</dbReference>
<sequence length="115" mass="12534">MEAPAQLLFLLLLWLPDTTGEIVMTQSPATLSVSPGERATLSCRASQSVSSNLAWYQQKPGQAPRLLIYGASIRATGIPARFSGSGSGTEFTLTISILQSEDFAVYYCQQYNNWP</sequence>
<feature type="signal peptide" evidence="2">
    <location>
        <begin position="1"/>
        <end position="20"/>
    </location>
</feature>
<feature type="chain" id="PRO_5008198977" description="Immunoglobulin kappa variable 3D-15" evidence="2">
    <location>
        <begin position="21"/>
        <end position="115"/>
    </location>
</feature>
<feature type="domain" description="Ig-like" evidence="3">
    <location>
        <begin position="21"/>
        <end position="115" status="greater than"/>
    </location>
</feature>
<feature type="region of interest" description="Framework-1" evidence="1">
    <location>
        <begin position="21"/>
        <end position="43"/>
    </location>
</feature>
<feature type="region of interest" description="Complementarity-determining-1" evidence="1">
    <location>
        <begin position="44"/>
        <end position="54"/>
    </location>
</feature>
<feature type="region of interest" description="Framework-2" evidence="1">
    <location>
        <begin position="55"/>
        <end position="69"/>
    </location>
</feature>
<feature type="region of interest" description="Complementarity-determining-2" evidence="1">
    <location>
        <begin position="70"/>
        <end position="76"/>
    </location>
</feature>
<feature type="region of interest" description="Framework-3" evidence="1">
    <location>
        <begin position="77"/>
        <end position="108"/>
    </location>
</feature>
<feature type="region of interest" description="Complementarity-determining-3" evidence="1">
    <location>
        <begin position="109"/>
        <end position="115" status="greater than"/>
    </location>
</feature>
<feature type="disulfide bond" evidence="3">
    <location>
        <begin position="43"/>
        <end position="108"/>
    </location>
</feature>
<feature type="non-terminal residue">
    <location>
        <position position="115"/>
    </location>
</feature>
<protein>
    <recommendedName>
        <fullName evidence="4 9">Immunoglobulin kappa variable 3D-15</fullName>
    </recommendedName>
</protein>
<gene>
    <name evidence="4 9" type="primary">IGKV3D-15</name>
</gene>
<evidence type="ECO:0000250" key="1">
    <source>
        <dbReference type="UniProtKB" id="P01602"/>
    </source>
</evidence>
<evidence type="ECO:0000255" key="2"/>
<evidence type="ECO:0000255" key="3">
    <source>
        <dbReference type="PROSITE-ProRule" id="PRU00114"/>
    </source>
</evidence>
<evidence type="ECO:0000303" key="4">
    <source>
    </source>
</evidence>
<evidence type="ECO:0000303" key="5">
    <source>
    </source>
</evidence>
<evidence type="ECO:0000303" key="6">
    <source>
    </source>
</evidence>
<evidence type="ECO:0000303" key="7">
    <source>
    </source>
</evidence>
<evidence type="ECO:0000303" key="8">
    <source>
    </source>
</evidence>
<evidence type="ECO:0000303" key="9">
    <source ref="3"/>
</evidence>
<evidence type="ECO:0000305" key="10"/>
<proteinExistence type="evidence at protein level"/>
<accession>A0A087WSY6</accession>
<keyword id="KW-1064">Adaptive immunity</keyword>
<keyword id="KW-1003">Cell membrane</keyword>
<keyword id="KW-1015">Disulfide bond</keyword>
<keyword id="KW-0391">Immunity</keyword>
<keyword id="KW-1280">Immunoglobulin</keyword>
<keyword id="KW-0393">Immunoglobulin domain</keyword>
<keyword id="KW-0472">Membrane</keyword>
<keyword id="KW-1267">Proteomics identification</keyword>
<keyword id="KW-1185">Reference proteome</keyword>
<keyword id="KW-0964">Secreted</keyword>
<keyword id="KW-0732">Signal</keyword>